<keyword id="KW-0349">Heme</keyword>
<keyword id="KW-0408">Iron</keyword>
<keyword id="KW-0479">Metal-binding</keyword>
<keyword id="KW-0944">Nitration</keyword>
<keyword id="KW-0535">Nitrogen fixation</keyword>
<keyword id="KW-0561">Oxygen transport</keyword>
<keyword id="KW-0597">Phosphoprotein</keyword>
<keyword id="KW-0813">Transport</keyword>
<proteinExistence type="evidence at transcript level"/>
<organism>
    <name type="scientific">Lotus japonicus</name>
    <name type="common">Lotus corniculatus var. japonicus</name>
    <dbReference type="NCBI Taxonomy" id="34305"/>
    <lineage>
        <taxon>Eukaryota</taxon>
        <taxon>Viridiplantae</taxon>
        <taxon>Streptophyta</taxon>
        <taxon>Embryophyta</taxon>
        <taxon>Tracheophyta</taxon>
        <taxon>Spermatophyta</taxon>
        <taxon>Magnoliopsida</taxon>
        <taxon>eudicotyledons</taxon>
        <taxon>Gunneridae</taxon>
        <taxon>Pentapetalae</taxon>
        <taxon>rosids</taxon>
        <taxon>fabids</taxon>
        <taxon>Fabales</taxon>
        <taxon>Fabaceae</taxon>
        <taxon>Papilionoideae</taxon>
        <taxon>50 kb inversion clade</taxon>
        <taxon>NPAAA clade</taxon>
        <taxon>Hologalegina</taxon>
        <taxon>robinioid clade</taxon>
        <taxon>Loteae</taxon>
        <taxon>Lotus</taxon>
    </lineage>
</organism>
<dbReference type="EMBL" id="BT145084">
    <property type="protein sequence ID" value="AFK44878.1"/>
    <property type="molecule type" value="mRNA"/>
</dbReference>
<dbReference type="SMR" id="I3SX86"/>
<dbReference type="OMA" id="KWSEEMA"/>
<dbReference type="OrthoDB" id="2012505at2759"/>
<dbReference type="GO" id="GO:0020037">
    <property type="term" value="F:heme binding"/>
    <property type="evidence" value="ECO:0007669"/>
    <property type="project" value="InterPro"/>
</dbReference>
<dbReference type="GO" id="GO:0046872">
    <property type="term" value="F:metal ion binding"/>
    <property type="evidence" value="ECO:0007669"/>
    <property type="project" value="UniProtKB-KW"/>
</dbReference>
<dbReference type="GO" id="GO:0019825">
    <property type="term" value="F:oxygen binding"/>
    <property type="evidence" value="ECO:0007669"/>
    <property type="project" value="InterPro"/>
</dbReference>
<dbReference type="GO" id="GO:0005344">
    <property type="term" value="F:oxygen carrier activity"/>
    <property type="evidence" value="ECO:0007669"/>
    <property type="project" value="UniProtKB-KW"/>
</dbReference>
<dbReference type="GO" id="GO:0009737">
    <property type="term" value="P:response to abscisic acid"/>
    <property type="evidence" value="ECO:0000270"/>
    <property type="project" value="UniProtKB"/>
</dbReference>
<dbReference type="GO" id="GO:0009735">
    <property type="term" value="P:response to cytokinin"/>
    <property type="evidence" value="ECO:0000270"/>
    <property type="project" value="UniProtKB"/>
</dbReference>
<dbReference type="GO" id="GO:0009753">
    <property type="term" value="P:response to jasmonic acid"/>
    <property type="evidence" value="ECO:0000270"/>
    <property type="project" value="UniProtKB"/>
</dbReference>
<dbReference type="GO" id="GO:1904583">
    <property type="term" value="P:response to polyamine macromolecule"/>
    <property type="evidence" value="ECO:0000270"/>
    <property type="project" value="UniProtKB"/>
</dbReference>
<dbReference type="CDD" id="cd08923">
    <property type="entry name" value="class1-2_nsHbs_Lbs"/>
    <property type="match status" value="1"/>
</dbReference>
<dbReference type="Gene3D" id="1.10.490.10">
    <property type="entry name" value="Globins"/>
    <property type="match status" value="1"/>
</dbReference>
<dbReference type="InterPro" id="IPR000971">
    <property type="entry name" value="Globin"/>
</dbReference>
<dbReference type="InterPro" id="IPR009050">
    <property type="entry name" value="Globin-like_sf"/>
</dbReference>
<dbReference type="InterPro" id="IPR012292">
    <property type="entry name" value="Globin/Proto"/>
</dbReference>
<dbReference type="InterPro" id="IPR001032">
    <property type="entry name" value="Leghaemoglobin-like"/>
</dbReference>
<dbReference type="PANTHER" id="PTHR22924">
    <property type="entry name" value="LEGHEMOGLOBIN-RELATED"/>
    <property type="match status" value="1"/>
</dbReference>
<dbReference type="PANTHER" id="PTHR22924:SF92">
    <property type="entry name" value="NON-SYMBIOTIC HEMOGLOBIN 2"/>
    <property type="match status" value="1"/>
</dbReference>
<dbReference type="Pfam" id="PF00042">
    <property type="entry name" value="Globin"/>
    <property type="match status" value="1"/>
</dbReference>
<dbReference type="PRINTS" id="PR00188">
    <property type="entry name" value="PLANTGLOBIN"/>
</dbReference>
<dbReference type="SUPFAM" id="SSF46458">
    <property type="entry name" value="Globin-like"/>
    <property type="match status" value="1"/>
</dbReference>
<dbReference type="PROSITE" id="PS01033">
    <property type="entry name" value="GLOBIN"/>
    <property type="match status" value="1"/>
</dbReference>
<protein>
    <recommendedName>
        <fullName evidence="8">Atypical leghemoglobin 2-1</fullName>
        <shortName evidence="8">LjGlb2-1</shortName>
    </recommendedName>
    <alternativeName>
        <fullName evidence="9">Phytoglobin 2.1</fullName>
        <shortName evidence="9">Phytogb2.1</shortName>
    </alternativeName>
</protein>
<gene>
    <name evidence="8" type="primary">GLB2-1</name>
    <name evidence="10" type="ordered locus">LotjaGi5g1v0253250</name>
    <name evidence="10" type="ORF">Lj5g3v1699110</name>
</gene>
<reference key="1">
    <citation type="submission" date="2012-05" db="EMBL/GenBank/DDBJ databases">
        <authorList>
            <person name="Krishnakumar V."/>
            <person name="Cheung F."/>
            <person name="Xiao Y."/>
            <person name="Chan A."/>
            <person name="Moskal W.A."/>
            <person name="Town C.D."/>
        </authorList>
    </citation>
    <scope>NUCLEOTIDE SEQUENCE [MRNA]</scope>
</reference>
<reference key="2">
    <citation type="journal article" date="2011" name="New Phytol.">
        <title>Regulation of nonsymbiotic and truncated hemoglobin genes of Lotus japonicus in plant organs and in response to nitric oxide and hormones.</title>
        <authorList>
            <person name="Bustos-Sanmamed P."/>
            <person name="Tovar-Mendez A."/>
            <person name="Crespi M."/>
            <person name="Sato S."/>
            <person name="Tabata S."/>
            <person name="Becana M."/>
        </authorList>
    </citation>
    <scope>TISSUE SPECIFICITY</scope>
    <scope>DEVELOPMENTAL STAGE</scope>
    <scope>INDUCTION BY ABSCISIC ACID; GIBBERELLIC ACID AND POLYAMINES</scope>
    <scope>REPRESSION BY CYTOKININS AND ETHYLENE</scope>
    <source>
        <strain>cv. MG20</strain>
    </source>
</reference>
<reference key="3">
    <citation type="journal article" date="2021" name="J. Exp. Bot.">
        <title>Three classes of hemoglobins are required for optimal vegetative and reproductive growth of Lotus japonicus: genetic and biochemical characterization of LjGlb2-1.</title>
        <authorList>
            <person name="Villar I."/>
            <person name="Rubio M.C."/>
            <person name="Calvo-Begueria L."/>
            <person name="Perez-Rontome C."/>
            <person name="Larrainzar E."/>
            <person name="Wilson M.T."/>
            <person name="Sandal N."/>
            <person name="Mur L.A."/>
            <person name="Wang L."/>
            <person name="Reeder B."/>
            <person name="Duanmu D."/>
            <person name="Uchiumi T."/>
            <person name="Stougaard J."/>
            <person name="Becana M."/>
        </authorList>
    </citation>
    <scope>FUNCTION</scope>
    <scope>DISRUPTION PHENOTYPE</scope>
    <scope>TISSUE SPECIFICITY</scope>
    <source>
        <strain>cv. Gifu B-129</strain>
    </source>
</reference>
<accession>I3SX86</accession>
<evidence type="ECO:0000250" key="1">
    <source>
        <dbReference type="UniProtKB" id="P02234"/>
    </source>
</evidence>
<evidence type="ECO:0000250" key="2">
    <source>
        <dbReference type="UniProtKB" id="P02237"/>
    </source>
</evidence>
<evidence type="ECO:0000250" key="3">
    <source>
        <dbReference type="UniProtKB" id="P02240"/>
    </source>
</evidence>
<evidence type="ECO:0000250" key="4">
    <source>
        <dbReference type="UniProtKB" id="Q3C1F7"/>
    </source>
</evidence>
<evidence type="ECO:0000255" key="5">
    <source>
        <dbReference type="PROSITE-ProRule" id="PRU00238"/>
    </source>
</evidence>
<evidence type="ECO:0000269" key="6">
    <source>
    </source>
</evidence>
<evidence type="ECO:0000269" key="7">
    <source>
    </source>
</evidence>
<evidence type="ECO:0000303" key="8">
    <source>
    </source>
</evidence>
<evidence type="ECO:0000305" key="9"/>
<evidence type="ECO:0000305" key="10">
    <source>
    </source>
</evidence>
<feature type="chain" id="PRO_0000460302" description="Atypical leghemoglobin 2-1">
    <location>
        <begin position="1"/>
        <end position="152"/>
    </location>
</feature>
<feature type="domain" description="Globin" evidence="5">
    <location>
        <begin position="3"/>
        <end position="152"/>
    </location>
</feature>
<feature type="binding site" evidence="3">
    <location>
        <position position="46"/>
    </location>
    <ligand>
        <name>heme b</name>
        <dbReference type="ChEBI" id="CHEBI:60344"/>
    </ligand>
</feature>
<feature type="binding site" evidence="5">
    <location>
        <position position="64"/>
    </location>
    <ligand>
        <name>O2</name>
        <dbReference type="ChEBI" id="CHEBI:15379"/>
    </ligand>
</feature>
<feature type="binding site" evidence="3">
    <location>
        <position position="67"/>
    </location>
    <ligand>
        <name>heme b</name>
        <dbReference type="ChEBI" id="CHEBI:60344"/>
    </ligand>
</feature>
<feature type="binding site" description="proximal binding residue" evidence="5">
    <location>
        <position position="99"/>
    </location>
    <ligand>
        <name>heme b</name>
        <dbReference type="ChEBI" id="CHEBI:60344"/>
    </ligand>
    <ligandPart>
        <name>Fe</name>
        <dbReference type="ChEBI" id="CHEBI:18248"/>
    </ligandPart>
</feature>
<feature type="binding site" evidence="3">
    <location>
        <position position="102"/>
    </location>
    <ligand>
        <name>heme b</name>
        <dbReference type="ChEBI" id="CHEBI:60344"/>
    </ligand>
</feature>
<feature type="modified residue" description="Nitrated tyrosine" evidence="1">
    <location>
        <position position="31"/>
    </location>
</feature>
<feature type="modified residue" description="Phosphoserine" evidence="4">
    <location>
        <position position="46"/>
    </location>
</feature>
<feature type="modified residue" description="Nitrated tyrosine" evidence="1">
    <location>
        <position position="140"/>
    </location>
</feature>
<name>GLB21_LOTJA</name>
<sequence>MATFSEEQEALVNSSWEAFSQNIPQLSIIFYTSILEKAPEAKAMFSFLKDSDGVPKDNLDLEAHCEKVFELTRNSALQLRAKGKVEVERIALKFLGYVHAQRRVLDPHFLVLKEALLKTLKEAMGDKWSEEVSNAWGIAYDELAGVIKKGMS</sequence>
<comment type="function">
    <text evidence="2 7">Atypical leghemoglobin that reversibly binds oxygen O(2) through a pentacoordinated heme iron (PubMed:34387337). In nodules, facilitates the diffusion of oxygen to the bacteroids while preventing the bacterial nitrogenase from being inactivated by buffering dioxygen, nitric oxide and carbon monoxide (PubMed:34387337). This role is essential for symbiotic nitrogen fixation (SNF) (By similarity). Seems not restricted to symbiotic nitrogen fixation and root nodules formation, but also contributes to general plant development and metabolism (PubMed:34387337).</text>
</comment>
<comment type="subunit">
    <text evidence="3">Monomer.</text>
</comment>
<comment type="tissue specificity">
    <text evidence="6 7">Mainly expressed in leaves and, at low levels, in roots of non-nodulated plants (PubMed:34387337). However, accumulates also in nodules and roots, and, to a lower extent, in leaves, stems, flowers and fruits, in nodulated plants (PubMed:21073469, PubMed:34387337).</text>
</comment>
<comment type="developmental stage">
    <text evidence="6">In nodules, mainly localized in the cortex, and, to a lower extent, in the vascular bundles and infected tissues.</text>
</comment>
<comment type="induction">
    <text evidence="6">Induced by polyamines (PA), abscisic acid (ABA) and gibberellic acid (GA), but repressed by ethylene and cytokinins (CK, an equimolar mixture of kinetin and 6-benzyl-aminopurine) in nodules (PubMed:21073469). Induced by abscisic acid (ABA) in roots (PubMed:21073469).</text>
</comment>
<comment type="PTM">
    <text evidence="1">Nitrated in effective nodules and particularly in hypoxic conditions; this mechanism may play a protective role in the symbiosis by buffering toxic peroxynitrite NO(2)(-). Nitration level decrease during nodule senescence.</text>
</comment>
<comment type="PTM">
    <text evidence="4">Phosphorylation at Ser-46 disrupts the molecular environment of its porphyrin ring oxygen binding pocket, thus leading to a reduced oxygen consumption and to the delivery of oxygen O(2) to symbiosomes.</text>
</comment>
<comment type="disruption phenotype">
    <text evidence="7">Smaller plants (shoots and roots), reduced number of leaves and nodules (PubMed:34387337). Delayed growth associated with altered leaves metabolome linked to amino-acids processing, hormonal balance (increased accumulation of salicylic acid, but reduced methyl jasmonic acid levels), as well as fermentative and respiratory pathways (PubMed:34387337).</text>
</comment>
<comment type="similarity">
    <text evidence="9">Belongs to the plant globin family.</text>
</comment>